<dbReference type="EC" id="1.14.99.-" evidence="2"/>
<dbReference type="EMBL" id="CP000255">
    <property type="protein sequence ID" value="ABD20958.1"/>
    <property type="molecule type" value="Genomic_DNA"/>
</dbReference>
<dbReference type="RefSeq" id="WP_000160456.1">
    <property type="nucleotide sequence ID" value="NZ_CP027476.1"/>
</dbReference>
<dbReference type="SMR" id="Q2FDU3"/>
<dbReference type="KEGG" id="saa:SAUSA300_2501"/>
<dbReference type="HOGENOM" id="CLU_019722_2_1_9"/>
<dbReference type="OMA" id="FTMRWVF"/>
<dbReference type="UniPathway" id="UPA00029">
    <property type="reaction ID" value="UER00558"/>
</dbReference>
<dbReference type="Proteomes" id="UP000001939">
    <property type="component" value="Chromosome"/>
</dbReference>
<dbReference type="GO" id="GO:0016491">
    <property type="term" value="F:oxidoreductase activity"/>
    <property type="evidence" value="ECO:0007669"/>
    <property type="project" value="UniProtKB-KW"/>
</dbReference>
<dbReference type="GO" id="GO:0016117">
    <property type="term" value="P:carotenoid biosynthetic process"/>
    <property type="evidence" value="ECO:0007669"/>
    <property type="project" value="UniProtKB-KW"/>
</dbReference>
<dbReference type="Gene3D" id="3.50.50.60">
    <property type="entry name" value="FAD/NAD(P)-binding domain"/>
    <property type="match status" value="2"/>
</dbReference>
<dbReference type="InterPro" id="IPR002937">
    <property type="entry name" value="Amino_oxidase"/>
</dbReference>
<dbReference type="InterPro" id="IPR014105">
    <property type="entry name" value="Carotenoid/retinoid_OxRdtase"/>
</dbReference>
<dbReference type="InterPro" id="IPR036188">
    <property type="entry name" value="FAD/NAD-bd_sf"/>
</dbReference>
<dbReference type="NCBIfam" id="TIGR02734">
    <property type="entry name" value="crtI_fam"/>
    <property type="match status" value="1"/>
</dbReference>
<dbReference type="PANTHER" id="PTHR43734:SF7">
    <property type="entry name" value="4,4'-DIAPONEUROSPORENE OXYGENASE"/>
    <property type="match status" value="1"/>
</dbReference>
<dbReference type="PANTHER" id="PTHR43734">
    <property type="entry name" value="PHYTOENE DESATURASE"/>
    <property type="match status" value="1"/>
</dbReference>
<dbReference type="Pfam" id="PF01593">
    <property type="entry name" value="Amino_oxidase"/>
    <property type="match status" value="1"/>
</dbReference>
<dbReference type="SUPFAM" id="SSF51905">
    <property type="entry name" value="FAD/NAD(P)-binding domain"/>
    <property type="match status" value="1"/>
</dbReference>
<keyword id="KW-0125">Carotenoid biosynthesis</keyword>
<keyword id="KW-0274">FAD</keyword>
<keyword id="KW-0285">Flavoprotein</keyword>
<keyword id="KW-0560">Oxidoreductase</keyword>
<keyword id="KW-0843">Virulence</keyword>
<accession>Q2FDU3</accession>
<reference key="1">
    <citation type="journal article" date="2006" name="Lancet">
        <title>Complete genome sequence of USA300, an epidemic clone of community-acquired meticillin-resistant Staphylococcus aureus.</title>
        <authorList>
            <person name="Diep B.A."/>
            <person name="Gill S.R."/>
            <person name="Chang R.F."/>
            <person name="Phan T.H."/>
            <person name="Chen J.H."/>
            <person name="Davidson M.G."/>
            <person name="Lin F."/>
            <person name="Lin J."/>
            <person name="Carleton H.A."/>
            <person name="Mongodin E.F."/>
            <person name="Sensabaugh G.F."/>
            <person name="Perdreau-Remington F."/>
        </authorList>
    </citation>
    <scope>NUCLEOTIDE SEQUENCE [LARGE SCALE GENOMIC DNA]</scope>
    <source>
        <strain>USA300</strain>
    </source>
</reference>
<organism>
    <name type="scientific">Staphylococcus aureus (strain USA300)</name>
    <dbReference type="NCBI Taxonomy" id="367830"/>
    <lineage>
        <taxon>Bacteria</taxon>
        <taxon>Bacillati</taxon>
        <taxon>Bacillota</taxon>
        <taxon>Bacilli</taxon>
        <taxon>Bacillales</taxon>
        <taxon>Staphylococcaceae</taxon>
        <taxon>Staphylococcus</taxon>
    </lineage>
</organism>
<evidence type="ECO:0000250" key="1">
    <source>
        <dbReference type="UniProtKB" id="P21685"/>
    </source>
</evidence>
<evidence type="ECO:0000250" key="2">
    <source>
        <dbReference type="UniProtKB" id="Q2FV57"/>
    </source>
</evidence>
<evidence type="ECO:0000255" key="3"/>
<gene>
    <name evidence="2" type="primary">crtP</name>
    <name type="ordered locus">SAUSA300_2501</name>
</gene>
<comment type="function">
    <text evidence="2">Involved in the biosynthesis of the yellow-orange carotenoid staphyloxanthin, which plays a role in the virulence via its protective function against oxidative stress. Catalyzes the oxidation of the terminal methyl side group of 4,4'-diaponeurosporene to form 4,4'-diaponeurosporen-4-al.</text>
</comment>
<comment type="catalytic activity">
    <reaction evidence="2">
        <text>all-trans-4,4'-diaponeurosporene + 2 AH2 + 2 O2 = 4,4'-diaponeurosporenal + 2 A + 3 H2O</text>
        <dbReference type="Rhea" id="RHEA:56104"/>
        <dbReference type="ChEBI" id="CHEBI:13193"/>
        <dbReference type="ChEBI" id="CHEBI:15377"/>
        <dbReference type="ChEBI" id="CHEBI:15379"/>
        <dbReference type="ChEBI" id="CHEBI:17499"/>
        <dbReference type="ChEBI" id="CHEBI:62743"/>
        <dbReference type="ChEBI" id="CHEBI:79065"/>
    </reaction>
</comment>
<comment type="cofactor">
    <cofactor evidence="1">
        <name>FAD</name>
        <dbReference type="ChEBI" id="CHEBI:57692"/>
    </cofactor>
</comment>
<comment type="pathway">
    <text evidence="2">Carotenoid biosynthesis; staphyloxanthin biosynthesis; staphyloxanthin from farnesyl diphosphate: step 3/5.</text>
</comment>
<comment type="similarity">
    <text evidence="2">Belongs to the carotenoid/retinoid oxidoreductase family. CrtP subfamily.</text>
</comment>
<protein>
    <recommendedName>
        <fullName evidence="2">4,4'-diaponeurosporene oxygenase</fullName>
        <ecNumber evidence="2">1.14.99.-</ecNumber>
    </recommendedName>
    <alternativeName>
        <fullName evidence="2">4,4'-diaponeurosporene oxidase</fullName>
    </alternativeName>
    <alternativeName>
        <fullName evidence="2">Carotenoid oxidase</fullName>
    </alternativeName>
</protein>
<proteinExistence type="inferred from homology"/>
<sequence length="497" mass="57187">MTKHIIVIGGGLGGISAAIRMAQSGYSVSLYEQNNHIGGKVNRHESDGFGFDLGPSILTMPYIFEKLFEYSKKQMSDYVTIKRLPHQWRSFFPDGTTIDLYEGIKETGQHNAILSKQDIEELQNYLNYTRRIDRITEKGYFNYGLDTLSQIIKFHGPLNALINYDYVHTMQQAIDKRISNPYLRQMLGYFIKYVGSSSYDAPAVLSMLFHMQQEQGLWYVEGGIHHLANALEKLAREEGVTIHTGARVDNIKTYQRRVTGVRLDTGEFVKADYIISNMEVIPTYKYLIHLDTQRLNKLEREFEPASSGYVMHLGVACQYPQLAHHNFFFTENAYLNYQQVFHEKVLPDDPTIYLVNTNKTDHTQAPVGYENIKVLPHIPYIQDQPFTTEDYAKFRDKILDKLEKMGLTDLRKHIIYEDVWTPEDIEKNYRSNRGAIYGVVADKKKNKGFKFPKESQYFENLYFVGGSVNPGGGMPMVTLSGQQVADKINAREAKNRK</sequence>
<name>CRTP_STAA3</name>
<feature type="chain" id="PRO_0000285232" description="4,4'-diaponeurosporene oxygenase">
    <location>
        <begin position="1"/>
        <end position="497"/>
    </location>
</feature>
<feature type="binding site" evidence="3">
    <location>
        <begin position="7"/>
        <end position="19"/>
    </location>
    <ligand>
        <name>FAD</name>
        <dbReference type="ChEBI" id="CHEBI:57692"/>
    </ligand>
</feature>